<feature type="chain" id="PRO_1000187944" description="Ribonuclease Z">
    <location>
        <begin position="1"/>
        <end position="304"/>
    </location>
</feature>
<feature type="active site" description="Proton acceptor" evidence="1">
    <location>
        <position position="67"/>
    </location>
</feature>
<feature type="binding site" evidence="1">
    <location>
        <position position="63"/>
    </location>
    <ligand>
        <name>Zn(2+)</name>
        <dbReference type="ChEBI" id="CHEBI:29105"/>
        <label>1</label>
        <note>catalytic</note>
    </ligand>
</feature>
<feature type="binding site" evidence="1">
    <location>
        <position position="65"/>
    </location>
    <ligand>
        <name>Zn(2+)</name>
        <dbReference type="ChEBI" id="CHEBI:29105"/>
        <label>1</label>
        <note>catalytic</note>
    </ligand>
</feature>
<feature type="binding site" evidence="1">
    <location>
        <position position="67"/>
    </location>
    <ligand>
        <name>Zn(2+)</name>
        <dbReference type="ChEBI" id="CHEBI:29105"/>
        <label>2</label>
        <note>catalytic</note>
    </ligand>
</feature>
<feature type="binding site" evidence="1">
    <location>
        <position position="68"/>
    </location>
    <ligand>
        <name>Zn(2+)</name>
        <dbReference type="ChEBI" id="CHEBI:29105"/>
        <label>2</label>
        <note>catalytic</note>
    </ligand>
</feature>
<feature type="binding site" evidence="1">
    <location>
        <position position="141"/>
    </location>
    <ligand>
        <name>Zn(2+)</name>
        <dbReference type="ChEBI" id="CHEBI:29105"/>
        <label>1</label>
        <note>catalytic</note>
    </ligand>
</feature>
<feature type="binding site" evidence="1">
    <location>
        <position position="208"/>
    </location>
    <ligand>
        <name>Zn(2+)</name>
        <dbReference type="ChEBI" id="CHEBI:29105"/>
        <label>1</label>
        <note>catalytic</note>
    </ligand>
</feature>
<feature type="binding site" evidence="1">
    <location>
        <position position="208"/>
    </location>
    <ligand>
        <name>Zn(2+)</name>
        <dbReference type="ChEBI" id="CHEBI:29105"/>
        <label>2</label>
        <note>catalytic</note>
    </ligand>
</feature>
<feature type="binding site" evidence="1">
    <location>
        <position position="266"/>
    </location>
    <ligand>
        <name>Zn(2+)</name>
        <dbReference type="ChEBI" id="CHEBI:29105"/>
        <label>2</label>
        <note>catalytic</note>
    </ligand>
</feature>
<evidence type="ECO:0000255" key="1">
    <source>
        <dbReference type="HAMAP-Rule" id="MF_01818"/>
    </source>
</evidence>
<name>RNZ_CHLTB</name>
<organism>
    <name type="scientific">Chlamydia trachomatis serovar L2b (strain UCH-1/proctitis)</name>
    <dbReference type="NCBI Taxonomy" id="471473"/>
    <lineage>
        <taxon>Bacteria</taxon>
        <taxon>Pseudomonadati</taxon>
        <taxon>Chlamydiota</taxon>
        <taxon>Chlamydiia</taxon>
        <taxon>Chlamydiales</taxon>
        <taxon>Chlamydiaceae</taxon>
        <taxon>Chlamydia/Chlamydophila group</taxon>
        <taxon>Chlamydia</taxon>
    </lineage>
</organism>
<gene>
    <name evidence="1" type="primary">rnz</name>
    <name type="ordered locus">CTLon_0598</name>
</gene>
<sequence length="304" mass="34662">MSYRGLTILGCSSQQPTRHRNHGAYLLRWNGEGLLFDPGEGTQRQFIYANIAPTVVSRIFISHFHGDHCLGLGSMLMRLNLDRVSHPIHCYYPASGKKYFDRLRYSTIYHETIKVIEHPIDREGIVEDFGNFRIESRQLDHLVDTLGWRITEPDTTKFIPEKIKAAGLKGPIMQELINKGRVKVNDTIVHLDDVSYTRKGDSIAVVADSLPCQAIVDLARNARILLCESTYLEEHSHLAKSHYHMTAKQAAEQAKRAEVQQLILTHFSARYNTTEEFVQEAGEIFPNVFAAEEFCSYEFPKNPS</sequence>
<dbReference type="EC" id="3.1.26.11" evidence="1"/>
<dbReference type="EMBL" id="AM884177">
    <property type="protein sequence ID" value="CAP06995.1"/>
    <property type="molecule type" value="Genomic_DNA"/>
</dbReference>
<dbReference type="RefSeq" id="WP_009873744.1">
    <property type="nucleotide sequence ID" value="NC_010280.2"/>
</dbReference>
<dbReference type="SMR" id="B0BBY0"/>
<dbReference type="KEGG" id="ctl:CTLon_0598"/>
<dbReference type="HOGENOM" id="CLU_031317_2_1_0"/>
<dbReference type="Proteomes" id="UP001154401">
    <property type="component" value="Chromosome"/>
</dbReference>
<dbReference type="GO" id="GO:0042781">
    <property type="term" value="F:3'-tRNA processing endoribonuclease activity"/>
    <property type="evidence" value="ECO:0007669"/>
    <property type="project" value="UniProtKB-UniRule"/>
</dbReference>
<dbReference type="GO" id="GO:0008270">
    <property type="term" value="F:zinc ion binding"/>
    <property type="evidence" value="ECO:0007669"/>
    <property type="project" value="UniProtKB-UniRule"/>
</dbReference>
<dbReference type="CDD" id="cd07717">
    <property type="entry name" value="RNaseZ_ZiPD-like_MBL-fold"/>
    <property type="match status" value="1"/>
</dbReference>
<dbReference type="CDD" id="cd00165">
    <property type="entry name" value="S4"/>
    <property type="match status" value="1"/>
</dbReference>
<dbReference type="FunFam" id="3.60.15.10:FF:000098">
    <property type="entry name" value="Ribonuclease Z"/>
    <property type="match status" value="1"/>
</dbReference>
<dbReference type="Gene3D" id="3.60.15.10">
    <property type="entry name" value="Ribonuclease Z/Hydroxyacylglutathione hydrolase-like"/>
    <property type="match status" value="1"/>
</dbReference>
<dbReference type="HAMAP" id="MF_01818">
    <property type="entry name" value="RNase_Z_BN"/>
    <property type="match status" value="1"/>
</dbReference>
<dbReference type="InterPro" id="IPR001279">
    <property type="entry name" value="Metallo-B-lactamas"/>
</dbReference>
<dbReference type="InterPro" id="IPR036866">
    <property type="entry name" value="RibonucZ/Hydroxyglut_hydro"/>
</dbReference>
<dbReference type="InterPro" id="IPR013471">
    <property type="entry name" value="RNase_Z/BN"/>
</dbReference>
<dbReference type="NCBIfam" id="NF000801">
    <property type="entry name" value="PRK00055.1-3"/>
    <property type="match status" value="1"/>
</dbReference>
<dbReference type="NCBIfam" id="NF000804">
    <property type="entry name" value="PRK00055.2-1"/>
    <property type="match status" value="1"/>
</dbReference>
<dbReference type="NCBIfam" id="TIGR02651">
    <property type="entry name" value="RNase_Z"/>
    <property type="match status" value="1"/>
</dbReference>
<dbReference type="PANTHER" id="PTHR46018">
    <property type="entry name" value="ZINC PHOSPHODIESTERASE ELAC PROTEIN 1"/>
    <property type="match status" value="1"/>
</dbReference>
<dbReference type="PANTHER" id="PTHR46018:SF2">
    <property type="entry name" value="ZINC PHOSPHODIESTERASE ELAC PROTEIN 1"/>
    <property type="match status" value="1"/>
</dbReference>
<dbReference type="Pfam" id="PF00753">
    <property type="entry name" value="Lactamase_B"/>
    <property type="match status" value="1"/>
</dbReference>
<dbReference type="SUPFAM" id="SSF56281">
    <property type="entry name" value="Metallo-hydrolase/oxidoreductase"/>
    <property type="match status" value="1"/>
</dbReference>
<proteinExistence type="inferred from homology"/>
<protein>
    <recommendedName>
        <fullName evidence="1">Ribonuclease Z</fullName>
        <shortName evidence="1">RNase Z</shortName>
        <ecNumber evidence="1">3.1.26.11</ecNumber>
    </recommendedName>
    <alternativeName>
        <fullName evidence="1">tRNA 3 endonuclease</fullName>
    </alternativeName>
    <alternativeName>
        <fullName evidence="1">tRNase Z</fullName>
    </alternativeName>
</protein>
<reference key="1">
    <citation type="journal article" date="2008" name="Genome Res.">
        <title>Chlamydia trachomatis: genome sequence analysis of lymphogranuloma venereum isolates.</title>
        <authorList>
            <person name="Thomson N.R."/>
            <person name="Holden M.T.G."/>
            <person name="Carder C."/>
            <person name="Lennard N."/>
            <person name="Lockey S.J."/>
            <person name="Marsh P."/>
            <person name="Skipp P."/>
            <person name="O'Connor C.D."/>
            <person name="Goodhead I."/>
            <person name="Norbertzcak H."/>
            <person name="Harris B."/>
            <person name="Ormond D."/>
            <person name="Rance R."/>
            <person name="Quail M.A."/>
            <person name="Parkhill J."/>
            <person name="Stephens R.S."/>
            <person name="Clarke I.N."/>
        </authorList>
    </citation>
    <scope>NUCLEOTIDE SEQUENCE [LARGE SCALE GENOMIC DNA]</scope>
    <source>
        <strain>UCH-1/proctitis</strain>
    </source>
</reference>
<accession>B0BBY0</accession>
<comment type="function">
    <text evidence="1">Zinc phosphodiesterase, which displays some tRNA 3'-processing endonuclease activity. Probably involved in tRNA maturation, by removing a 3'-trailer from precursor tRNA.</text>
</comment>
<comment type="catalytic activity">
    <reaction evidence="1">
        <text>Endonucleolytic cleavage of RNA, removing extra 3' nucleotides from tRNA precursor, generating 3' termini of tRNAs. A 3'-hydroxy group is left at the tRNA terminus and a 5'-phosphoryl group is left at the trailer molecule.</text>
        <dbReference type="EC" id="3.1.26.11"/>
    </reaction>
</comment>
<comment type="cofactor">
    <cofactor evidence="1">
        <name>Zn(2+)</name>
        <dbReference type="ChEBI" id="CHEBI:29105"/>
    </cofactor>
    <text evidence="1">Binds 2 Zn(2+) ions.</text>
</comment>
<comment type="subunit">
    <text evidence="1">Homodimer.</text>
</comment>
<comment type="similarity">
    <text evidence="1">Belongs to the RNase Z family.</text>
</comment>
<keyword id="KW-0255">Endonuclease</keyword>
<keyword id="KW-0378">Hydrolase</keyword>
<keyword id="KW-0479">Metal-binding</keyword>
<keyword id="KW-0540">Nuclease</keyword>
<keyword id="KW-0819">tRNA processing</keyword>
<keyword id="KW-0862">Zinc</keyword>